<gene>
    <name evidence="1" type="primary">adk</name>
    <name type="ordered locus">CTA_0135</name>
</gene>
<name>KAD_CHLTA</name>
<keyword id="KW-0067">ATP-binding</keyword>
<keyword id="KW-0963">Cytoplasm</keyword>
<keyword id="KW-0418">Kinase</keyword>
<keyword id="KW-0479">Metal-binding</keyword>
<keyword id="KW-0545">Nucleotide biosynthesis</keyword>
<keyword id="KW-0547">Nucleotide-binding</keyword>
<keyword id="KW-0808">Transferase</keyword>
<keyword id="KW-0862">Zinc</keyword>
<sequence length="245" mass="27785">MDRSPLFLIIMGAPGSGKGTQSKLLASQLSLLHISSGDLLRDAVSKDTPLSQEIKSYLDQGKLLPDTLVWKLVHEKLDEFQQDTLLRRLSFLSRSENSAILDGFPRTVTQAKLLHEFLSSYFPNYKVILLDISDEEVLNRLTSRYICPACQGIYNEQQGFSSCPKCSVELIRRSDDTLEVILDRIQTYKQETQPVLDYYTEKQKLITIDANAPTQQVFQSILDSLSASLVYQERDCCNCDCDDED</sequence>
<accession>Q3KMP1</accession>
<comment type="function">
    <text evidence="1">Catalyzes the reversible transfer of the terminal phosphate group between ATP and AMP. Plays an important role in cellular energy homeostasis and in adenine nucleotide metabolism.</text>
</comment>
<comment type="catalytic activity">
    <reaction evidence="1">
        <text>AMP + ATP = 2 ADP</text>
        <dbReference type="Rhea" id="RHEA:12973"/>
        <dbReference type="ChEBI" id="CHEBI:30616"/>
        <dbReference type="ChEBI" id="CHEBI:456215"/>
        <dbReference type="ChEBI" id="CHEBI:456216"/>
        <dbReference type="EC" id="2.7.4.3"/>
    </reaction>
</comment>
<comment type="pathway">
    <text evidence="1">Purine metabolism; AMP biosynthesis via salvage pathway; AMP from ADP: step 1/1.</text>
</comment>
<comment type="subunit">
    <text evidence="1">Monomer.</text>
</comment>
<comment type="subcellular location">
    <subcellularLocation>
        <location evidence="1">Cytoplasm</location>
    </subcellularLocation>
</comment>
<comment type="domain">
    <text evidence="1">Consists of three domains, a large central CORE domain and two small peripheral domains, NMPbind and LID, which undergo movements during catalysis. The LID domain closes over the site of phosphoryl transfer upon ATP binding. Assembling and dissambling the active center during each catalytic cycle provides an effective means to prevent ATP hydrolysis. Some bacteria have evolved a zinc-coordinating structure that stabilizes the LID domain.</text>
</comment>
<comment type="similarity">
    <text evidence="1">Belongs to the adenylate kinase family.</text>
</comment>
<evidence type="ECO:0000255" key="1">
    <source>
        <dbReference type="HAMAP-Rule" id="MF_00235"/>
    </source>
</evidence>
<feature type="chain" id="PRO_1000021717" description="Adenylate kinase">
    <location>
        <begin position="1"/>
        <end position="245"/>
    </location>
</feature>
<feature type="region of interest" description="NMP" evidence="1">
    <location>
        <begin position="35"/>
        <end position="64"/>
    </location>
</feature>
<feature type="region of interest" description="LID" evidence="1">
    <location>
        <begin position="143"/>
        <end position="176"/>
    </location>
</feature>
<feature type="binding site" evidence="1">
    <location>
        <begin position="15"/>
        <end position="20"/>
    </location>
    <ligand>
        <name>ATP</name>
        <dbReference type="ChEBI" id="CHEBI:30616"/>
    </ligand>
</feature>
<feature type="binding site" evidence="1">
    <location>
        <position position="36"/>
    </location>
    <ligand>
        <name>AMP</name>
        <dbReference type="ChEBI" id="CHEBI:456215"/>
    </ligand>
</feature>
<feature type="binding site" evidence="1">
    <location>
        <position position="41"/>
    </location>
    <ligand>
        <name>AMP</name>
        <dbReference type="ChEBI" id="CHEBI:456215"/>
    </ligand>
</feature>
<feature type="binding site" evidence="1">
    <location>
        <begin position="62"/>
        <end position="64"/>
    </location>
    <ligand>
        <name>AMP</name>
        <dbReference type="ChEBI" id="CHEBI:456215"/>
    </ligand>
</feature>
<feature type="binding site" evidence="1">
    <location>
        <begin position="103"/>
        <end position="106"/>
    </location>
    <ligand>
        <name>AMP</name>
        <dbReference type="ChEBI" id="CHEBI:456215"/>
    </ligand>
</feature>
<feature type="binding site" evidence="1">
    <location>
        <position position="110"/>
    </location>
    <ligand>
        <name>AMP</name>
        <dbReference type="ChEBI" id="CHEBI:456215"/>
    </ligand>
</feature>
<feature type="binding site" evidence="1">
    <location>
        <position position="144"/>
    </location>
    <ligand>
        <name>ATP</name>
        <dbReference type="ChEBI" id="CHEBI:30616"/>
    </ligand>
</feature>
<feature type="binding site" evidence="1">
    <location>
        <position position="147"/>
    </location>
    <ligand>
        <name>Zn(2+)</name>
        <dbReference type="ChEBI" id="CHEBI:29105"/>
        <note>structural</note>
    </ligand>
</feature>
<feature type="binding site" evidence="1">
    <location>
        <position position="150"/>
    </location>
    <ligand>
        <name>Zn(2+)</name>
        <dbReference type="ChEBI" id="CHEBI:29105"/>
        <note>structural</note>
    </ligand>
</feature>
<feature type="binding site" evidence="1">
    <location>
        <begin position="153"/>
        <end position="154"/>
    </location>
    <ligand>
        <name>ATP</name>
        <dbReference type="ChEBI" id="CHEBI:30616"/>
    </ligand>
</feature>
<feature type="binding site" evidence="1">
    <location>
        <position position="163"/>
    </location>
    <ligand>
        <name>Zn(2+)</name>
        <dbReference type="ChEBI" id="CHEBI:29105"/>
        <note>structural</note>
    </ligand>
</feature>
<feature type="binding site" evidence="1">
    <location>
        <position position="166"/>
    </location>
    <ligand>
        <name>Zn(2+)</name>
        <dbReference type="ChEBI" id="CHEBI:29105"/>
        <note>structural</note>
    </ligand>
</feature>
<feature type="binding site" evidence="1">
    <location>
        <position position="173"/>
    </location>
    <ligand>
        <name>AMP</name>
        <dbReference type="ChEBI" id="CHEBI:456215"/>
    </ligand>
</feature>
<feature type="binding site" evidence="1">
    <location>
        <position position="184"/>
    </location>
    <ligand>
        <name>AMP</name>
        <dbReference type="ChEBI" id="CHEBI:456215"/>
    </ligand>
</feature>
<feature type="binding site" evidence="1">
    <location>
        <position position="212"/>
    </location>
    <ligand>
        <name>ATP</name>
        <dbReference type="ChEBI" id="CHEBI:30616"/>
    </ligand>
</feature>
<proteinExistence type="inferred from homology"/>
<protein>
    <recommendedName>
        <fullName evidence="1">Adenylate kinase</fullName>
        <shortName evidence="1">AK</shortName>
        <ecNumber evidence="1">2.7.4.3</ecNumber>
    </recommendedName>
    <alternativeName>
        <fullName evidence="1">ATP-AMP transphosphorylase</fullName>
    </alternativeName>
    <alternativeName>
        <fullName evidence="1">ATP:AMP phosphotransferase</fullName>
    </alternativeName>
    <alternativeName>
        <fullName evidence="1">Adenylate monophosphate kinase</fullName>
    </alternativeName>
</protein>
<organism>
    <name type="scientific">Chlamydia trachomatis serovar A (strain ATCC VR-571B / DSM 19440 / HAR-13)</name>
    <dbReference type="NCBI Taxonomy" id="315277"/>
    <lineage>
        <taxon>Bacteria</taxon>
        <taxon>Pseudomonadati</taxon>
        <taxon>Chlamydiota</taxon>
        <taxon>Chlamydiia</taxon>
        <taxon>Chlamydiales</taxon>
        <taxon>Chlamydiaceae</taxon>
        <taxon>Chlamydia/Chlamydophila group</taxon>
        <taxon>Chlamydia</taxon>
    </lineage>
</organism>
<dbReference type="EC" id="2.7.4.3" evidence="1"/>
<dbReference type="EMBL" id="CP000051">
    <property type="protein sequence ID" value="AAX50381.1"/>
    <property type="molecule type" value="Genomic_DNA"/>
</dbReference>
<dbReference type="RefSeq" id="WP_009872398.1">
    <property type="nucleotide sequence ID" value="NC_007429.1"/>
</dbReference>
<dbReference type="SMR" id="Q3KMP1"/>
<dbReference type="KEGG" id="cta:CTA_0135"/>
<dbReference type="HOGENOM" id="CLU_032354_1_2_0"/>
<dbReference type="UniPathway" id="UPA00588">
    <property type="reaction ID" value="UER00649"/>
</dbReference>
<dbReference type="Proteomes" id="UP000002532">
    <property type="component" value="Chromosome"/>
</dbReference>
<dbReference type="GO" id="GO:0005737">
    <property type="term" value="C:cytoplasm"/>
    <property type="evidence" value="ECO:0007669"/>
    <property type="project" value="UniProtKB-SubCell"/>
</dbReference>
<dbReference type="GO" id="GO:0004017">
    <property type="term" value="F:adenylate kinase activity"/>
    <property type="evidence" value="ECO:0007669"/>
    <property type="project" value="UniProtKB-UniRule"/>
</dbReference>
<dbReference type="GO" id="GO:0005524">
    <property type="term" value="F:ATP binding"/>
    <property type="evidence" value="ECO:0007669"/>
    <property type="project" value="UniProtKB-UniRule"/>
</dbReference>
<dbReference type="GO" id="GO:0046872">
    <property type="term" value="F:metal ion binding"/>
    <property type="evidence" value="ECO:0007669"/>
    <property type="project" value="UniProtKB-KW"/>
</dbReference>
<dbReference type="GO" id="GO:0044209">
    <property type="term" value="P:AMP salvage"/>
    <property type="evidence" value="ECO:0007669"/>
    <property type="project" value="UniProtKB-UniRule"/>
</dbReference>
<dbReference type="CDD" id="cd01428">
    <property type="entry name" value="ADK"/>
    <property type="match status" value="1"/>
</dbReference>
<dbReference type="Gene3D" id="3.40.50.300">
    <property type="entry name" value="P-loop containing nucleotide triphosphate hydrolases"/>
    <property type="match status" value="1"/>
</dbReference>
<dbReference type="HAMAP" id="MF_00235">
    <property type="entry name" value="Adenylate_kinase_Adk"/>
    <property type="match status" value="1"/>
</dbReference>
<dbReference type="InterPro" id="IPR006259">
    <property type="entry name" value="Adenyl_kin_sub"/>
</dbReference>
<dbReference type="InterPro" id="IPR000850">
    <property type="entry name" value="Adenylat/UMP-CMP_kin"/>
</dbReference>
<dbReference type="InterPro" id="IPR033690">
    <property type="entry name" value="Adenylat_kinase_CS"/>
</dbReference>
<dbReference type="InterPro" id="IPR027417">
    <property type="entry name" value="P-loop_NTPase"/>
</dbReference>
<dbReference type="NCBIfam" id="TIGR01351">
    <property type="entry name" value="adk"/>
    <property type="match status" value="1"/>
</dbReference>
<dbReference type="NCBIfam" id="NF001385">
    <property type="entry name" value="PRK00279.2-3"/>
    <property type="match status" value="1"/>
</dbReference>
<dbReference type="PANTHER" id="PTHR23359">
    <property type="entry name" value="NUCLEOTIDE KINASE"/>
    <property type="match status" value="1"/>
</dbReference>
<dbReference type="Pfam" id="PF00406">
    <property type="entry name" value="ADK"/>
    <property type="match status" value="1"/>
</dbReference>
<dbReference type="PRINTS" id="PR00094">
    <property type="entry name" value="ADENYLTKNASE"/>
</dbReference>
<dbReference type="SUPFAM" id="SSF52540">
    <property type="entry name" value="P-loop containing nucleoside triphosphate hydrolases"/>
    <property type="match status" value="1"/>
</dbReference>
<dbReference type="SUPFAM" id="SSF57802">
    <property type="entry name" value="Rubredoxin-like"/>
    <property type="match status" value="1"/>
</dbReference>
<dbReference type="PROSITE" id="PS00113">
    <property type="entry name" value="ADENYLATE_KINASE"/>
    <property type="match status" value="1"/>
</dbReference>
<reference key="1">
    <citation type="journal article" date="2005" name="Infect. Immun.">
        <title>Comparative genomic analysis of Chlamydia trachomatis oculotropic and genitotropic strains.</title>
        <authorList>
            <person name="Carlson J.H."/>
            <person name="Porcella S.F."/>
            <person name="McClarty G."/>
            <person name="Caldwell H.D."/>
        </authorList>
    </citation>
    <scope>NUCLEOTIDE SEQUENCE [LARGE SCALE GENOMIC DNA]</scope>
    <source>
        <strain>ATCC VR-571B / DSM 19440 / HAR-13</strain>
    </source>
</reference>